<dbReference type="EMBL" id="AE000516">
    <property type="protein sequence ID" value="AAK48167.1"/>
    <property type="molecule type" value="Genomic_DNA"/>
</dbReference>
<dbReference type="RefSeq" id="WP_003419787.1">
    <property type="nucleotide sequence ID" value="NZ_KK341227.1"/>
</dbReference>
<dbReference type="SMR" id="P9WJ14"/>
<dbReference type="KEGG" id="mtc:MT3800"/>
<dbReference type="PATRIC" id="fig|83331.31.peg.4092"/>
<dbReference type="HOGENOM" id="CLU_2684008_0_0_11"/>
<dbReference type="Proteomes" id="UP000001020">
    <property type="component" value="Chromosome"/>
</dbReference>
<proteinExistence type="predicted"/>
<accession>P9WJ14</accession>
<accession>F2GFK6</accession>
<accession>P0CW36</accession>
<accession>Q8VIV3</accession>
<comment type="function">
    <text evidence="1">Possibly the antitoxin component of a type II toxin-antitoxin (TA) system. Its cognate toxin is VapC48 (Potential).</text>
</comment>
<organism>
    <name type="scientific">Mycobacterium tuberculosis (strain CDC 1551 / Oshkosh)</name>
    <dbReference type="NCBI Taxonomy" id="83331"/>
    <lineage>
        <taxon>Bacteria</taxon>
        <taxon>Bacillati</taxon>
        <taxon>Actinomycetota</taxon>
        <taxon>Actinomycetes</taxon>
        <taxon>Mycobacteriales</taxon>
        <taxon>Mycobacteriaceae</taxon>
        <taxon>Mycobacterium</taxon>
        <taxon>Mycobacterium tuberculosis complex</taxon>
    </lineage>
</organism>
<sequence>MRTTIDLDDDILRALKRRQREERKTLGQLASELLAQALAAEPPPNVDIRWSTADLRPRVDLDDKDAVWAILDRG</sequence>
<evidence type="ECO:0000305" key="1"/>
<feature type="chain" id="PRO_0000427909" description="Putative antitoxin VapB48">
    <location>
        <begin position="1"/>
        <end position="74"/>
    </location>
</feature>
<reference key="1">
    <citation type="journal article" date="2002" name="J. Bacteriol.">
        <title>Whole-genome comparison of Mycobacterium tuberculosis clinical and laboratory strains.</title>
        <authorList>
            <person name="Fleischmann R.D."/>
            <person name="Alland D."/>
            <person name="Eisen J.A."/>
            <person name="Carpenter L."/>
            <person name="White O."/>
            <person name="Peterson J.D."/>
            <person name="DeBoy R.T."/>
            <person name="Dodson R.J."/>
            <person name="Gwinn M.L."/>
            <person name="Haft D.H."/>
            <person name="Hickey E.K."/>
            <person name="Kolonay J.F."/>
            <person name="Nelson W.C."/>
            <person name="Umayam L.A."/>
            <person name="Ermolaeva M.D."/>
            <person name="Salzberg S.L."/>
            <person name="Delcher A."/>
            <person name="Utterback T.R."/>
            <person name="Weidman J.F."/>
            <person name="Khouri H.M."/>
            <person name="Gill J."/>
            <person name="Mikula A."/>
            <person name="Bishai W."/>
            <person name="Jacobs W.R. Jr."/>
            <person name="Venter J.C."/>
            <person name="Fraser C.M."/>
        </authorList>
    </citation>
    <scope>NUCLEOTIDE SEQUENCE [LARGE SCALE GENOMIC DNA]</scope>
    <source>
        <strain>CDC 1551 / Oshkosh</strain>
    </source>
</reference>
<name>VPB48_MYCTO</name>
<keyword id="KW-1185">Reference proteome</keyword>
<keyword id="KW-1277">Toxin-antitoxin system</keyword>
<gene>
    <name type="primary">vapB48</name>
    <name type="ordered locus">MT3800</name>
</gene>
<protein>
    <recommendedName>
        <fullName>Putative antitoxin VapB48</fullName>
    </recommendedName>
</protein>